<comment type="function">
    <text evidence="3">Has a hypotensive activity.</text>
</comment>
<comment type="subcellular location">
    <subcellularLocation>
        <location evidence="1">Secreted</location>
    </subcellularLocation>
</comment>
<comment type="alternative products">
    <event type="alternative splicing"/>
    <isoform>
        <id>E2E4F7-1</id>
        <name>Celestoxin-1</name>
        <sequence type="displayed"/>
    </isoform>
    <isoform>
        <id>E2E4F7-2</id>
        <name>Celestoxin-2</name>
        <sequence type="described" ref="VSP_041809"/>
    </isoform>
</comment>
<comment type="tissue specificity">
    <text>Expressed by the mandibular venom gland.</text>
</comment>
<dbReference type="EMBL" id="GU441474">
    <property type="protein sequence ID" value="ADK39238.1"/>
    <property type="molecule type" value="mRNA"/>
</dbReference>
<dbReference type="EMBL" id="GU441475">
    <property type="protein sequence ID" value="ADK39239.1"/>
    <property type="molecule type" value="mRNA"/>
</dbReference>
<dbReference type="GO" id="GO:0005576">
    <property type="term" value="C:extracellular region"/>
    <property type="evidence" value="ECO:0007669"/>
    <property type="project" value="UniProtKB-SubCell"/>
</dbReference>
<dbReference type="GO" id="GO:0090729">
    <property type="term" value="F:toxin activity"/>
    <property type="evidence" value="ECO:0007669"/>
    <property type="project" value="UniProtKB-KW"/>
</dbReference>
<dbReference type="GO" id="GO:0008217">
    <property type="term" value="P:regulation of blood pressure"/>
    <property type="evidence" value="ECO:0007669"/>
    <property type="project" value="UniProtKB-KW"/>
</dbReference>
<keyword id="KW-0025">Alternative splicing</keyword>
<keyword id="KW-0382">Hypotensive agent</keyword>
<keyword id="KW-0964">Secreted</keyword>
<keyword id="KW-0732">Signal</keyword>
<keyword id="KW-0800">Toxin</keyword>
<accession>E2E4F7</accession>
<accession>E2E4F8</accession>
<organism>
    <name type="scientific">Caribicus warreni</name>
    <name type="common">Haitian giant galliwasp</name>
    <name type="synonym">Celestus warreni</name>
    <dbReference type="NCBI Taxonomy" id="865857"/>
    <lineage>
        <taxon>Eukaryota</taxon>
        <taxon>Metazoa</taxon>
        <taxon>Chordata</taxon>
        <taxon>Craniata</taxon>
        <taxon>Vertebrata</taxon>
        <taxon>Euteleostomi</taxon>
        <taxon>Lepidosauria</taxon>
        <taxon>Squamata</taxon>
        <taxon>Bifurcata</taxon>
        <taxon>Unidentata</taxon>
        <taxon>Episquamata</taxon>
        <taxon>Toxicofera</taxon>
        <taxon>Anguimorpha</taxon>
        <taxon>Diploglossidae</taxon>
        <taxon>Caribicus</taxon>
    </lineage>
</organism>
<reference key="1">
    <citation type="journal article" date="2010" name="Mol. Cell. Proteomics">
        <title>Functional and structural diversification of the Anguimorpha lizard venom system.</title>
        <authorList>
            <person name="Fry B.G."/>
            <person name="Winter K."/>
            <person name="Norman J.A."/>
            <person name="Roelants K."/>
            <person name="Nabuurs R.J."/>
            <person name="van Osch M.J."/>
            <person name="Teeuwisse W.M."/>
            <person name="van der Weerd L."/>
            <person name="McNaughtan J.E."/>
            <person name="Kwok H.F."/>
            <person name="Scheib H."/>
            <person name="Greisman L."/>
            <person name="Kochva E."/>
            <person name="Miller L.J."/>
            <person name="Gao F."/>
            <person name="Karas J."/>
            <person name="Scanlon D."/>
            <person name="Lin F."/>
            <person name="Kuruppu S."/>
            <person name="Shaw C."/>
            <person name="Wong L."/>
            <person name="Hodgson W.C."/>
        </authorList>
    </citation>
    <scope>NUCLEOTIDE SEQUENCE [MRNA] (ISOFORMS CELESTOXIN-1 AND CELESTOXIN-2)</scope>
    <scope>SYNTHESIS OF 153-185</scope>
    <scope>FUNCTION</scope>
    <source>
        <strain>Haiti</strain>
        <tissue>Venom gland</tissue>
    </source>
</reference>
<proteinExistence type="evidence at transcript level"/>
<name>CLTX_CARWR</name>
<protein>
    <recommendedName>
        <fullName>Celestoxin</fullName>
    </recommendedName>
</protein>
<feature type="signal peptide" evidence="2">
    <location>
        <begin position="1"/>
        <end position="20"/>
    </location>
</feature>
<feature type="propeptide" id="PRO_0000412827" evidence="2">
    <location>
        <begin position="21"/>
        <end position="148"/>
    </location>
</feature>
<feature type="chain" id="PRO_0000412828" description="Celestoxin">
    <location>
        <begin position="153"/>
        <end position="185"/>
    </location>
</feature>
<feature type="splice variant" id="VSP_041809" description="In isoform Celestoxin-2." evidence="4">
    <location>
        <begin position="135"/>
        <end position="146"/>
    </location>
</feature>
<evidence type="ECO:0000250" key="1"/>
<evidence type="ECO:0000255" key="2"/>
<evidence type="ECO:0000269" key="3">
    <source>
    </source>
</evidence>
<evidence type="ECO:0000303" key="4">
    <source>
    </source>
</evidence>
<sequence>MKFIAAVLLVALLCPKDSTSLASRLSGLLGGDGILGGSGLLGGLGKIPLGGRLLGGRPDDVLREDDVLGEVGGRPDDVLGEVGGRPDDVLGEVGGRPDDGLGELGGGPNRLFGGSRLFGGVEKVVAGIPLPNVADVAGGLPVALPVSVRRRRALGVVGGLPVPKLPGVAGGLPVPKLPVPLPVNL</sequence>